<organism>
    <name type="scientific">Escherichia coli (strain K12 / DH10B)</name>
    <dbReference type="NCBI Taxonomy" id="316385"/>
    <lineage>
        <taxon>Bacteria</taxon>
        <taxon>Pseudomonadati</taxon>
        <taxon>Pseudomonadota</taxon>
        <taxon>Gammaproteobacteria</taxon>
        <taxon>Enterobacterales</taxon>
        <taxon>Enterobacteriaceae</taxon>
        <taxon>Escherichia</taxon>
    </lineage>
</organism>
<name>RUTE_ECODH</name>
<accession>B1X9C9</accession>
<protein>
    <recommendedName>
        <fullName evidence="1">Probable malonic semialdehyde reductase RutE</fullName>
        <ecNumber evidence="1">1.1.1.298</ecNumber>
    </recommendedName>
</protein>
<reference key="1">
    <citation type="journal article" date="2008" name="J. Bacteriol.">
        <title>The complete genome sequence of Escherichia coli DH10B: insights into the biology of a laboratory workhorse.</title>
        <authorList>
            <person name="Durfee T."/>
            <person name="Nelson R."/>
            <person name="Baldwin S."/>
            <person name="Plunkett G. III"/>
            <person name="Burland V."/>
            <person name="Mau B."/>
            <person name="Petrosino J.F."/>
            <person name="Qin X."/>
            <person name="Muzny D.M."/>
            <person name="Ayele M."/>
            <person name="Gibbs R.A."/>
            <person name="Csorgo B."/>
            <person name="Posfai G."/>
            <person name="Weinstock G.M."/>
            <person name="Blattner F.R."/>
        </authorList>
    </citation>
    <scope>NUCLEOTIDE SEQUENCE [LARGE SCALE GENOMIC DNA]</scope>
    <source>
        <strain>K12 / DH10B</strain>
    </source>
</reference>
<gene>
    <name evidence="1" type="primary">rutE</name>
    <name type="ordered locus">ECDH10B_1080</name>
</gene>
<dbReference type="EC" id="1.1.1.298" evidence="1"/>
<dbReference type="EMBL" id="CP000948">
    <property type="protein sequence ID" value="ACB02209.1"/>
    <property type="molecule type" value="Genomic_DNA"/>
</dbReference>
<dbReference type="RefSeq" id="WP_001001176.1">
    <property type="nucleotide sequence ID" value="NC_010473.1"/>
</dbReference>
<dbReference type="SMR" id="B1X9C9"/>
<dbReference type="KEGG" id="ecd:ECDH10B_1080"/>
<dbReference type="HOGENOM" id="CLU_084441_0_0_6"/>
<dbReference type="GO" id="GO:0035527">
    <property type="term" value="F:3-hydroxypropionate dehydrogenase (NADP+) activity"/>
    <property type="evidence" value="ECO:0007669"/>
    <property type="project" value="UniProtKB-UniRule"/>
</dbReference>
<dbReference type="GO" id="GO:0019740">
    <property type="term" value="P:nitrogen utilization"/>
    <property type="evidence" value="ECO:0007669"/>
    <property type="project" value="UniProtKB-UniRule"/>
</dbReference>
<dbReference type="GO" id="GO:0006212">
    <property type="term" value="P:uracil catabolic process"/>
    <property type="evidence" value="ECO:0007669"/>
    <property type="project" value="UniProtKB-UniRule"/>
</dbReference>
<dbReference type="CDD" id="cd02148">
    <property type="entry name" value="RutE-like"/>
    <property type="match status" value="1"/>
</dbReference>
<dbReference type="FunFam" id="3.40.109.10:FF:000003">
    <property type="entry name" value="Probable malonic semialdehyde reductase RutE"/>
    <property type="match status" value="1"/>
</dbReference>
<dbReference type="Gene3D" id="3.40.109.10">
    <property type="entry name" value="NADH Oxidase"/>
    <property type="match status" value="1"/>
</dbReference>
<dbReference type="HAMAP" id="MF_01204">
    <property type="entry name" value="Oxidoreductase_RutE_HadB"/>
    <property type="match status" value="1"/>
</dbReference>
<dbReference type="InterPro" id="IPR029479">
    <property type="entry name" value="Nitroreductase"/>
</dbReference>
<dbReference type="InterPro" id="IPR000415">
    <property type="entry name" value="Nitroreductase-like"/>
</dbReference>
<dbReference type="InterPro" id="IPR050461">
    <property type="entry name" value="Nitroreductase_HadB/RutE"/>
</dbReference>
<dbReference type="InterPro" id="IPR023936">
    <property type="entry name" value="RutE-like"/>
</dbReference>
<dbReference type="NCBIfam" id="NF003768">
    <property type="entry name" value="PRK05365.1"/>
    <property type="match status" value="1"/>
</dbReference>
<dbReference type="PANTHER" id="PTHR43543">
    <property type="entry name" value="MALONIC SEMIALDEHYDE REDUCTASE RUTE-RELATED"/>
    <property type="match status" value="1"/>
</dbReference>
<dbReference type="PANTHER" id="PTHR43543:SF1">
    <property type="entry name" value="MALONIC SEMIALDEHYDE REDUCTASE RUTE-RELATED"/>
    <property type="match status" value="1"/>
</dbReference>
<dbReference type="Pfam" id="PF00881">
    <property type="entry name" value="Nitroreductase"/>
    <property type="match status" value="1"/>
</dbReference>
<dbReference type="SUPFAM" id="SSF55469">
    <property type="entry name" value="FMN-dependent nitroreductase-like"/>
    <property type="match status" value="1"/>
</dbReference>
<feature type="chain" id="PRO_1000138693" description="Probable malonic semialdehyde reductase RutE">
    <location>
        <begin position="1"/>
        <end position="196"/>
    </location>
</feature>
<proteinExistence type="inferred from homology"/>
<sequence>MNEAVSPGALSTLFTDARTHNGWRETPVSDETLREIYALMKWGPTSANCSPARIVFTRTAEGKERLRPALSSGNLQKTLTAPVTAIVAWDSEFYERLPLLFPHGDARSWFTSSPQLAEETAFRNSSMQAAYLIVACRALGLDTGPMSGFDRQHVDDAFFTGSTLKSNLLINIGYGDSSKLYARLPRLSFEEACGLL</sequence>
<keyword id="KW-0285">Flavoprotein</keyword>
<keyword id="KW-0288">FMN</keyword>
<keyword id="KW-0520">NAD</keyword>
<keyword id="KW-0521">NADP</keyword>
<keyword id="KW-0560">Oxidoreductase</keyword>
<evidence type="ECO:0000255" key="1">
    <source>
        <dbReference type="HAMAP-Rule" id="MF_01204"/>
    </source>
</evidence>
<comment type="function">
    <text evidence="1">May reduce toxic product malonic semialdehyde to 3-hydroxypropionic acid, which is excreted.</text>
</comment>
<comment type="catalytic activity">
    <reaction evidence="1">
        <text>3-hydroxypropanoate + NADP(+) = 3-oxopropanoate + NADPH + H(+)</text>
        <dbReference type="Rhea" id="RHEA:26438"/>
        <dbReference type="ChEBI" id="CHEBI:15378"/>
        <dbReference type="ChEBI" id="CHEBI:16510"/>
        <dbReference type="ChEBI" id="CHEBI:33190"/>
        <dbReference type="ChEBI" id="CHEBI:57783"/>
        <dbReference type="ChEBI" id="CHEBI:58349"/>
        <dbReference type="EC" id="1.1.1.298"/>
    </reaction>
</comment>
<comment type="cofactor">
    <cofactor evidence="1">
        <name>FMN</name>
        <dbReference type="ChEBI" id="CHEBI:58210"/>
    </cofactor>
</comment>
<comment type="induction">
    <text evidence="1">Up-regulated by the nitrogen regulatory protein C (NtrC also called GlnG) and repressed by RutR.</text>
</comment>
<comment type="similarity">
    <text evidence="1">Belongs to the nitroreductase family. HadB/RutE subfamily.</text>
</comment>